<name>RS8_DEHMC</name>
<keyword id="KW-0687">Ribonucleoprotein</keyword>
<keyword id="KW-0689">Ribosomal protein</keyword>
<keyword id="KW-0694">RNA-binding</keyword>
<keyword id="KW-0699">rRNA-binding</keyword>
<accession>Q3ZZL0</accession>
<protein>
    <recommendedName>
        <fullName evidence="1">Small ribosomal subunit protein uS8</fullName>
    </recommendedName>
    <alternativeName>
        <fullName evidence="2">30S ribosomal protein S8</fullName>
    </alternativeName>
</protein>
<sequence length="131" mass="14409">MISDPIADMLTRIRNGVMARHEVVIMPASRMKQYLAKVMKQEGFIAGYEVIGAKPKRQLKIVLRYDEGGASFVSGLERISKPGLRVYVQRGEIPRVYGGLGVAIVSTSKGVMTGSQAWRQGLGGELLCKVW</sequence>
<reference key="1">
    <citation type="journal article" date="2005" name="Nat. Biotechnol.">
        <title>Genome sequence of the chlorinated compound-respiring bacterium Dehalococcoides species strain CBDB1.</title>
        <authorList>
            <person name="Kube M."/>
            <person name="Beck A."/>
            <person name="Zinder S.H."/>
            <person name="Kuhl H."/>
            <person name="Reinhardt R."/>
            <person name="Adrian L."/>
        </authorList>
    </citation>
    <scope>NUCLEOTIDE SEQUENCE [LARGE SCALE GENOMIC DNA]</scope>
    <source>
        <strain>CBDB1</strain>
    </source>
</reference>
<gene>
    <name evidence="1" type="primary">rpsH</name>
    <name type="ordered locus">cbdbA452</name>
</gene>
<proteinExistence type="inferred from homology"/>
<comment type="function">
    <text evidence="1">One of the primary rRNA binding proteins, it binds directly to 16S rRNA central domain where it helps coordinate assembly of the platform of the 30S subunit.</text>
</comment>
<comment type="subunit">
    <text evidence="1">Part of the 30S ribosomal subunit. Contacts proteins S5 and S12.</text>
</comment>
<comment type="similarity">
    <text evidence="1">Belongs to the universal ribosomal protein uS8 family.</text>
</comment>
<feature type="chain" id="PRO_0000225869" description="Small ribosomal subunit protein uS8">
    <location>
        <begin position="1"/>
        <end position="131"/>
    </location>
</feature>
<dbReference type="EMBL" id="AJ965256">
    <property type="protein sequence ID" value="CAI82653.1"/>
    <property type="molecule type" value="Genomic_DNA"/>
</dbReference>
<dbReference type="RefSeq" id="WP_011309009.1">
    <property type="nucleotide sequence ID" value="NC_007356.1"/>
</dbReference>
<dbReference type="SMR" id="Q3ZZL0"/>
<dbReference type="KEGG" id="deh:cbdbA452"/>
<dbReference type="HOGENOM" id="CLU_098428_0_2_0"/>
<dbReference type="Proteomes" id="UP000000433">
    <property type="component" value="Chromosome"/>
</dbReference>
<dbReference type="GO" id="GO:1990904">
    <property type="term" value="C:ribonucleoprotein complex"/>
    <property type="evidence" value="ECO:0007669"/>
    <property type="project" value="UniProtKB-KW"/>
</dbReference>
<dbReference type="GO" id="GO:0005840">
    <property type="term" value="C:ribosome"/>
    <property type="evidence" value="ECO:0007669"/>
    <property type="project" value="UniProtKB-KW"/>
</dbReference>
<dbReference type="GO" id="GO:0019843">
    <property type="term" value="F:rRNA binding"/>
    <property type="evidence" value="ECO:0007669"/>
    <property type="project" value="UniProtKB-UniRule"/>
</dbReference>
<dbReference type="GO" id="GO:0003735">
    <property type="term" value="F:structural constituent of ribosome"/>
    <property type="evidence" value="ECO:0007669"/>
    <property type="project" value="InterPro"/>
</dbReference>
<dbReference type="GO" id="GO:0006412">
    <property type="term" value="P:translation"/>
    <property type="evidence" value="ECO:0007669"/>
    <property type="project" value="UniProtKB-UniRule"/>
</dbReference>
<dbReference type="FunFam" id="3.30.1370.30:FF:000002">
    <property type="entry name" value="30S ribosomal protein S8"/>
    <property type="match status" value="1"/>
</dbReference>
<dbReference type="FunFam" id="3.30.1490.10:FF:000001">
    <property type="entry name" value="30S ribosomal protein S8"/>
    <property type="match status" value="1"/>
</dbReference>
<dbReference type="Gene3D" id="3.30.1370.30">
    <property type="match status" value="1"/>
</dbReference>
<dbReference type="Gene3D" id="3.30.1490.10">
    <property type="match status" value="1"/>
</dbReference>
<dbReference type="HAMAP" id="MF_01302_B">
    <property type="entry name" value="Ribosomal_uS8_B"/>
    <property type="match status" value="1"/>
</dbReference>
<dbReference type="InterPro" id="IPR000630">
    <property type="entry name" value="Ribosomal_uS8"/>
</dbReference>
<dbReference type="InterPro" id="IPR035987">
    <property type="entry name" value="Ribosomal_uS8_sf"/>
</dbReference>
<dbReference type="NCBIfam" id="NF001109">
    <property type="entry name" value="PRK00136.1"/>
    <property type="match status" value="1"/>
</dbReference>
<dbReference type="PANTHER" id="PTHR11758">
    <property type="entry name" value="40S RIBOSOMAL PROTEIN S15A"/>
    <property type="match status" value="1"/>
</dbReference>
<dbReference type="Pfam" id="PF00410">
    <property type="entry name" value="Ribosomal_S8"/>
    <property type="match status" value="1"/>
</dbReference>
<dbReference type="SUPFAM" id="SSF56047">
    <property type="entry name" value="Ribosomal protein S8"/>
    <property type="match status" value="1"/>
</dbReference>
<organism>
    <name type="scientific">Dehalococcoides mccartyi (strain CBDB1)</name>
    <dbReference type="NCBI Taxonomy" id="255470"/>
    <lineage>
        <taxon>Bacteria</taxon>
        <taxon>Bacillati</taxon>
        <taxon>Chloroflexota</taxon>
        <taxon>Dehalococcoidia</taxon>
        <taxon>Dehalococcoidales</taxon>
        <taxon>Dehalococcoidaceae</taxon>
        <taxon>Dehalococcoides</taxon>
    </lineage>
</organism>
<evidence type="ECO:0000255" key="1">
    <source>
        <dbReference type="HAMAP-Rule" id="MF_01302"/>
    </source>
</evidence>
<evidence type="ECO:0000305" key="2"/>